<comment type="subunit">
    <text evidence="1">Part of the 30S ribosomal subunit.</text>
</comment>
<comment type="subcellular location">
    <subcellularLocation>
        <location>Plastid</location>
        <location>Chloroplast</location>
    </subcellularLocation>
</comment>
<comment type="similarity">
    <text evidence="1">Belongs to the universal ribosomal protein uS11 family.</text>
</comment>
<name>RR11_ZYGCR</name>
<proteinExistence type="inferred from homology"/>
<feature type="chain" id="PRO_0000230461" description="Small ribosomal subunit protein uS11c">
    <location>
        <begin position="1"/>
        <end position="130"/>
    </location>
</feature>
<accession>Q32RM9</accession>
<dbReference type="EMBL" id="AY958086">
    <property type="protein sequence ID" value="AAX45865.1"/>
    <property type="molecule type" value="Genomic_DNA"/>
</dbReference>
<dbReference type="RefSeq" id="YP_636497.1">
    <property type="nucleotide sequence ID" value="NC_008117.1"/>
</dbReference>
<dbReference type="SMR" id="Q32RM9"/>
<dbReference type="GeneID" id="4108185"/>
<dbReference type="GO" id="GO:0009507">
    <property type="term" value="C:chloroplast"/>
    <property type="evidence" value="ECO:0007669"/>
    <property type="project" value="UniProtKB-SubCell"/>
</dbReference>
<dbReference type="GO" id="GO:1990904">
    <property type="term" value="C:ribonucleoprotein complex"/>
    <property type="evidence" value="ECO:0007669"/>
    <property type="project" value="UniProtKB-KW"/>
</dbReference>
<dbReference type="GO" id="GO:0005840">
    <property type="term" value="C:ribosome"/>
    <property type="evidence" value="ECO:0007669"/>
    <property type="project" value="UniProtKB-KW"/>
</dbReference>
<dbReference type="GO" id="GO:0019843">
    <property type="term" value="F:rRNA binding"/>
    <property type="evidence" value="ECO:0007669"/>
    <property type="project" value="UniProtKB-UniRule"/>
</dbReference>
<dbReference type="GO" id="GO:0003735">
    <property type="term" value="F:structural constituent of ribosome"/>
    <property type="evidence" value="ECO:0007669"/>
    <property type="project" value="InterPro"/>
</dbReference>
<dbReference type="GO" id="GO:0006412">
    <property type="term" value="P:translation"/>
    <property type="evidence" value="ECO:0007669"/>
    <property type="project" value="UniProtKB-UniRule"/>
</dbReference>
<dbReference type="Gene3D" id="3.30.420.80">
    <property type="entry name" value="Ribosomal protein S11"/>
    <property type="match status" value="1"/>
</dbReference>
<dbReference type="HAMAP" id="MF_01310">
    <property type="entry name" value="Ribosomal_uS11"/>
    <property type="match status" value="1"/>
</dbReference>
<dbReference type="InterPro" id="IPR001971">
    <property type="entry name" value="Ribosomal_uS11"/>
</dbReference>
<dbReference type="InterPro" id="IPR019981">
    <property type="entry name" value="Ribosomal_uS11_bac-type"/>
</dbReference>
<dbReference type="InterPro" id="IPR018102">
    <property type="entry name" value="Ribosomal_uS11_CS"/>
</dbReference>
<dbReference type="InterPro" id="IPR036967">
    <property type="entry name" value="Ribosomal_uS11_sf"/>
</dbReference>
<dbReference type="NCBIfam" id="NF003698">
    <property type="entry name" value="PRK05309.1"/>
    <property type="match status" value="1"/>
</dbReference>
<dbReference type="NCBIfam" id="TIGR03632">
    <property type="entry name" value="uS11_bact"/>
    <property type="match status" value="1"/>
</dbReference>
<dbReference type="PANTHER" id="PTHR11759">
    <property type="entry name" value="40S RIBOSOMAL PROTEIN S14/30S RIBOSOMAL PROTEIN S11"/>
    <property type="match status" value="1"/>
</dbReference>
<dbReference type="Pfam" id="PF00411">
    <property type="entry name" value="Ribosomal_S11"/>
    <property type="match status" value="1"/>
</dbReference>
<dbReference type="PIRSF" id="PIRSF002131">
    <property type="entry name" value="Ribosomal_S11"/>
    <property type="match status" value="1"/>
</dbReference>
<dbReference type="SUPFAM" id="SSF53137">
    <property type="entry name" value="Translational machinery components"/>
    <property type="match status" value="1"/>
</dbReference>
<dbReference type="PROSITE" id="PS00054">
    <property type="entry name" value="RIBOSOMAL_S11"/>
    <property type="match status" value="1"/>
</dbReference>
<organism>
    <name type="scientific">Zygnema circumcarinatum</name>
    <name type="common">Green alga</name>
    <dbReference type="NCBI Taxonomy" id="35869"/>
    <lineage>
        <taxon>Eukaryota</taxon>
        <taxon>Viridiplantae</taxon>
        <taxon>Streptophyta</taxon>
        <taxon>Zygnematophyceae</taxon>
        <taxon>Zygnematophycidae</taxon>
        <taxon>Zygnematales</taxon>
        <taxon>Zygnemataceae</taxon>
        <taxon>Zygnema</taxon>
    </lineage>
</organism>
<protein>
    <recommendedName>
        <fullName evidence="1">Small ribosomal subunit protein uS11c</fullName>
    </recommendedName>
    <alternativeName>
        <fullName evidence="2">30S ribosomal protein S11, chloroplastic</fullName>
    </alternativeName>
</protein>
<gene>
    <name evidence="1" type="primary">rps11</name>
</gene>
<keyword id="KW-0150">Chloroplast</keyword>
<keyword id="KW-0934">Plastid</keyword>
<keyword id="KW-0687">Ribonucleoprotein</keyword>
<keyword id="KW-0689">Ribosomal protein</keyword>
<keyword id="KW-0694">RNA-binding</keyword>
<keyword id="KW-0699">rRNA-binding</keyword>
<geneLocation type="chloroplast"/>
<sequence length="130" mass="14120">MVRPANKILIRKNKRRTSKGVIHVQASFNNTIITITDVRGQVISWSSAGASGFKAAKKSTPFAAQIAAENALRVLIDQGMKQAEVMLSGPGRGRDTALRAIINSGIQLSFVRDVTPMPHNGCRAPKKRRV</sequence>
<reference key="1">
    <citation type="journal article" date="2005" name="BMC Biol.">
        <title>The complete chloroplast DNA sequences of the charophycean green algae Staurastrum and Zygnema reveal that the chloroplast genome underwent extensive changes during the evolution of the Zygnematales.</title>
        <authorList>
            <person name="Turmel M."/>
            <person name="Otis C."/>
            <person name="Lemieux C."/>
        </authorList>
    </citation>
    <scope>NUCLEOTIDE SEQUENCE [LARGE SCALE GENOMIC DNA]</scope>
</reference>
<evidence type="ECO:0000255" key="1">
    <source>
        <dbReference type="HAMAP-Rule" id="MF_01310"/>
    </source>
</evidence>
<evidence type="ECO:0000305" key="2"/>